<organism>
    <name type="scientific">Methanocaldococcus jannaschii (strain ATCC 43067 / DSM 2661 / JAL-1 / JCM 10045 / NBRC 100440)</name>
    <name type="common">Methanococcus jannaschii</name>
    <dbReference type="NCBI Taxonomy" id="243232"/>
    <lineage>
        <taxon>Archaea</taxon>
        <taxon>Methanobacteriati</taxon>
        <taxon>Methanobacteriota</taxon>
        <taxon>Methanomada group</taxon>
        <taxon>Methanococci</taxon>
        <taxon>Methanococcales</taxon>
        <taxon>Methanocaldococcaceae</taxon>
        <taxon>Methanocaldococcus</taxon>
    </lineage>
</organism>
<feature type="chain" id="PRO_0000194130" description="Uncharacterized MCM-type protein MJ0961">
    <location>
        <begin position="1"/>
        <end position="762"/>
    </location>
</feature>
<feature type="domain" description="MCM">
    <location>
        <begin position="334"/>
        <end position="542"/>
    </location>
</feature>
<feature type="binding site" evidence="1">
    <location>
        <begin position="384"/>
        <end position="391"/>
    </location>
    <ligand>
        <name>ATP</name>
        <dbReference type="ChEBI" id="CHEBI:30616"/>
    </ligand>
</feature>
<name>Y961_METJA</name>
<accession>Q58371</accession>
<dbReference type="EMBL" id="L77117">
    <property type="protein sequence ID" value="AAB98963.1"/>
    <property type="molecule type" value="Genomic_DNA"/>
</dbReference>
<dbReference type="PIR" id="A64420">
    <property type="entry name" value="A64420"/>
</dbReference>
<dbReference type="RefSeq" id="WP_010870475.1">
    <property type="nucleotide sequence ID" value="NC_000909.1"/>
</dbReference>
<dbReference type="SMR" id="Q58371"/>
<dbReference type="FunCoup" id="Q58371">
    <property type="interactions" value="105"/>
</dbReference>
<dbReference type="STRING" id="243232.MJ_0961"/>
<dbReference type="PaxDb" id="243232-MJ_0961"/>
<dbReference type="EnsemblBacteria" id="AAB98963">
    <property type="protein sequence ID" value="AAB98963"/>
    <property type="gene ID" value="MJ_0961"/>
</dbReference>
<dbReference type="GeneID" id="1451859"/>
<dbReference type="KEGG" id="mja:MJ_0961"/>
<dbReference type="eggNOG" id="arCOG00439">
    <property type="taxonomic scope" value="Archaea"/>
</dbReference>
<dbReference type="HOGENOM" id="CLU_000995_7_2_2"/>
<dbReference type="InParanoid" id="Q58371"/>
<dbReference type="OrthoDB" id="6747at2157"/>
<dbReference type="PhylomeDB" id="Q58371"/>
<dbReference type="Proteomes" id="UP000000805">
    <property type="component" value="Chromosome"/>
</dbReference>
<dbReference type="GO" id="GO:0042555">
    <property type="term" value="C:MCM complex"/>
    <property type="evidence" value="ECO:0000318"/>
    <property type="project" value="GO_Central"/>
</dbReference>
<dbReference type="GO" id="GO:0005524">
    <property type="term" value="F:ATP binding"/>
    <property type="evidence" value="ECO:0007669"/>
    <property type="project" value="UniProtKB-KW"/>
</dbReference>
<dbReference type="GO" id="GO:0003697">
    <property type="term" value="F:single-stranded DNA binding"/>
    <property type="evidence" value="ECO:0000318"/>
    <property type="project" value="GO_Central"/>
</dbReference>
<dbReference type="GO" id="GO:0006260">
    <property type="term" value="P:DNA replication"/>
    <property type="evidence" value="ECO:0007669"/>
    <property type="project" value="UniProtKB-KW"/>
</dbReference>
<dbReference type="CDD" id="cd17706">
    <property type="entry name" value="MCM"/>
    <property type="match status" value="1"/>
</dbReference>
<dbReference type="FunFam" id="3.40.50.300:FF:004147">
    <property type="entry name" value="Uncharacterized MCM-type protein MJ0961"/>
    <property type="match status" value="1"/>
</dbReference>
<dbReference type="Gene3D" id="3.40.50.300">
    <property type="entry name" value="P-loop containing nucleotide triphosphate hydrolases"/>
    <property type="match status" value="1"/>
</dbReference>
<dbReference type="Gene3D" id="1.10.10.10">
    <property type="entry name" value="Winged helix-like DNA-binding domain superfamily/Winged helix DNA-binding domain"/>
    <property type="match status" value="1"/>
</dbReference>
<dbReference type="InterPro" id="IPR031327">
    <property type="entry name" value="MCM"/>
</dbReference>
<dbReference type="InterPro" id="IPR018525">
    <property type="entry name" value="MCM_CS"/>
</dbReference>
<dbReference type="InterPro" id="IPR001208">
    <property type="entry name" value="MCM_dom"/>
</dbReference>
<dbReference type="InterPro" id="IPR041562">
    <property type="entry name" value="MCM_lid"/>
</dbReference>
<dbReference type="InterPro" id="IPR012340">
    <property type="entry name" value="NA-bd_OB-fold"/>
</dbReference>
<dbReference type="InterPro" id="IPR027417">
    <property type="entry name" value="P-loop_NTPase"/>
</dbReference>
<dbReference type="InterPro" id="IPR036388">
    <property type="entry name" value="WH-like_DNA-bd_sf"/>
</dbReference>
<dbReference type="PANTHER" id="PTHR11630">
    <property type="entry name" value="DNA REPLICATION LICENSING FACTOR MCM FAMILY MEMBER"/>
    <property type="match status" value="1"/>
</dbReference>
<dbReference type="PANTHER" id="PTHR11630:SF66">
    <property type="entry name" value="DNA REPLICATION LICENSING FACTOR MCM4"/>
    <property type="match status" value="1"/>
</dbReference>
<dbReference type="Pfam" id="PF00493">
    <property type="entry name" value="MCM"/>
    <property type="match status" value="1"/>
</dbReference>
<dbReference type="Pfam" id="PF17855">
    <property type="entry name" value="MCM_lid"/>
    <property type="match status" value="1"/>
</dbReference>
<dbReference type="PRINTS" id="PR01657">
    <property type="entry name" value="MCMFAMILY"/>
</dbReference>
<dbReference type="SMART" id="SM00350">
    <property type="entry name" value="MCM"/>
    <property type="match status" value="1"/>
</dbReference>
<dbReference type="SUPFAM" id="SSF50249">
    <property type="entry name" value="Nucleic acid-binding proteins"/>
    <property type="match status" value="1"/>
</dbReference>
<dbReference type="SUPFAM" id="SSF52540">
    <property type="entry name" value="P-loop containing nucleoside triphosphate hydrolases"/>
    <property type="match status" value="1"/>
</dbReference>
<dbReference type="PROSITE" id="PS00847">
    <property type="entry name" value="MCM_1"/>
    <property type="match status" value="1"/>
</dbReference>
<dbReference type="PROSITE" id="PS50051">
    <property type="entry name" value="MCM_2"/>
    <property type="match status" value="1"/>
</dbReference>
<proteinExistence type="inferred from homology"/>
<evidence type="ECO:0000255" key="1"/>
<evidence type="ECO:0000305" key="2"/>
<keyword id="KW-0067">ATP-binding</keyword>
<keyword id="KW-0131">Cell cycle</keyword>
<keyword id="KW-0235">DNA replication</keyword>
<keyword id="KW-0238">DNA-binding</keyword>
<keyword id="KW-0547">Nucleotide-binding</keyword>
<keyword id="KW-1185">Reference proteome</keyword>
<keyword id="KW-0804">Transcription</keyword>
<keyword id="KW-0805">Transcription regulation</keyword>
<sequence>MVNFDEEVFRAYYEHKIKSFIKEELSNNLIKGNIFEFDIEKFLMHFPDACEVNDLIIERPKEIEEIILDIFKEAYVELFGEDKELEKIQIAFKNPKGCEKLIEEISAEDINKLVKFEGNILQAGKVNALLKKAVYYCNKRIKDENGGFLCKYTYTPCDGRVEIEIDDYFSEGEFIKDMLSPREVKKILENKKVWDKLVEKGKIPRCVDLKENDEVFKENLKEIKFILDEYDSIYVNIQEMEIQQPIDLMKNPEEPARSIRVFLENTPGIYAGRVNVIGRVMKREYRHNIPIYKIYIKSNYIKISESYNKIEVKDILRNEELIETLNELGRKKNIIDILSNYLISQIKGYELVKKAIFLQQIKGAFKFLPDGTPLRRDSHILLITDPGIGKSTMLRRIARLFPQNAYASVTTATGGGLTAIVTREATEIGDGWVVKPGVFVRANEGTACIDELTVDKNVMKYILEAMESQTIHVNKGGINVKLPARCAVLAACNPKRGRFDRNLTVIEQIDIPAPLLSRFDLIFPLMDKPNRKSDEEIAEHILNTHIETATKDYKILGAIDIDGITVDEKLLKYYIIYARSCAYIEENQDLYLGEFDETKLIMPYLTDKAKKMIKKYYLEMRKLGEGDNPIPITARQLEAIIRIAEMHAKARLSDKVEDVDAEVAISIIDDCLKQVAYDPETGTLDLDKIAGTPKSRRDKMDAVLNIIREIVSLRDDGLAPEEEIYEKAMAIGLSEKDVNDALEYLKKAGDIYNPRYGFWGLL</sequence>
<gene>
    <name type="ordered locus">MJ0961</name>
</gene>
<reference key="1">
    <citation type="journal article" date="1996" name="Science">
        <title>Complete genome sequence of the methanogenic archaeon, Methanococcus jannaschii.</title>
        <authorList>
            <person name="Bult C.J."/>
            <person name="White O."/>
            <person name="Olsen G.J."/>
            <person name="Zhou L."/>
            <person name="Fleischmann R.D."/>
            <person name="Sutton G.G."/>
            <person name="Blake J.A."/>
            <person name="FitzGerald L.M."/>
            <person name="Clayton R.A."/>
            <person name="Gocayne J.D."/>
            <person name="Kerlavage A.R."/>
            <person name="Dougherty B.A."/>
            <person name="Tomb J.-F."/>
            <person name="Adams M.D."/>
            <person name="Reich C.I."/>
            <person name="Overbeek R."/>
            <person name="Kirkness E.F."/>
            <person name="Weinstock K.G."/>
            <person name="Merrick J.M."/>
            <person name="Glodek A."/>
            <person name="Scott J.L."/>
            <person name="Geoghagen N.S.M."/>
            <person name="Weidman J.F."/>
            <person name="Fuhrmann J.L."/>
            <person name="Nguyen D."/>
            <person name="Utterback T.R."/>
            <person name="Kelley J.M."/>
            <person name="Peterson J.D."/>
            <person name="Sadow P.W."/>
            <person name="Hanna M.C."/>
            <person name="Cotton M.D."/>
            <person name="Roberts K.M."/>
            <person name="Hurst M.A."/>
            <person name="Kaine B.P."/>
            <person name="Borodovsky M."/>
            <person name="Klenk H.-P."/>
            <person name="Fraser C.M."/>
            <person name="Smith H.O."/>
            <person name="Woese C.R."/>
            <person name="Venter J.C."/>
        </authorList>
    </citation>
    <scope>NUCLEOTIDE SEQUENCE [LARGE SCALE GENOMIC DNA]</scope>
    <source>
        <strain>ATCC 43067 / DSM 2661 / JAL-1 / JCM 10045 / NBRC 100440</strain>
    </source>
</reference>
<protein>
    <recommendedName>
        <fullName>Uncharacterized MCM-type protein MJ0961</fullName>
    </recommendedName>
</protein>
<comment type="similarity">
    <text evidence="2">Belongs to the MCM family.</text>
</comment>